<protein>
    <recommendedName>
        <fullName>Glyceraldehyde-3-phosphate dehydrogenase 1</fullName>
        <shortName>GAPDH</shortName>
        <ecNumber>1.2.1.12</ecNumber>
    </recommendedName>
</protein>
<dbReference type="EC" id="1.2.1.12"/>
<dbReference type="EMBL" id="M88062">
    <property type="protein sequence ID" value="AAB18421.1"/>
    <property type="molecule type" value="Genomic_DNA"/>
</dbReference>
<dbReference type="SMR" id="P53429"/>
<dbReference type="VEuPathDB" id="GiardiaDB:DHA2_6687"/>
<dbReference type="VEuPathDB" id="GiardiaDB:GL50581_521"/>
<dbReference type="VEuPathDB" id="GiardiaDB:GL50803_006687"/>
<dbReference type="VEuPathDB" id="GiardiaDB:QR46_3453"/>
<dbReference type="eggNOG" id="KOG0657">
    <property type="taxonomic scope" value="Eukaryota"/>
</dbReference>
<dbReference type="UniPathway" id="UPA00109">
    <property type="reaction ID" value="UER00184"/>
</dbReference>
<dbReference type="GO" id="GO:0005829">
    <property type="term" value="C:cytosol"/>
    <property type="evidence" value="ECO:0007669"/>
    <property type="project" value="TreeGrafter"/>
</dbReference>
<dbReference type="GO" id="GO:0004365">
    <property type="term" value="F:glyceraldehyde-3-phosphate dehydrogenase (NAD+) (phosphorylating) activity"/>
    <property type="evidence" value="ECO:0007669"/>
    <property type="project" value="UniProtKB-EC"/>
</dbReference>
<dbReference type="GO" id="GO:0051287">
    <property type="term" value="F:NAD binding"/>
    <property type="evidence" value="ECO:0007669"/>
    <property type="project" value="InterPro"/>
</dbReference>
<dbReference type="GO" id="GO:0050661">
    <property type="term" value="F:NADP binding"/>
    <property type="evidence" value="ECO:0007669"/>
    <property type="project" value="InterPro"/>
</dbReference>
<dbReference type="GO" id="GO:0006006">
    <property type="term" value="P:glucose metabolic process"/>
    <property type="evidence" value="ECO:0007669"/>
    <property type="project" value="InterPro"/>
</dbReference>
<dbReference type="GO" id="GO:0006096">
    <property type="term" value="P:glycolytic process"/>
    <property type="evidence" value="ECO:0007669"/>
    <property type="project" value="UniProtKB-UniPathway"/>
</dbReference>
<dbReference type="CDD" id="cd18126">
    <property type="entry name" value="GAPDH_I_C"/>
    <property type="match status" value="1"/>
</dbReference>
<dbReference type="CDD" id="cd05214">
    <property type="entry name" value="GAPDH_I_N"/>
    <property type="match status" value="1"/>
</dbReference>
<dbReference type="FunFam" id="3.30.360.10:FF:000001">
    <property type="entry name" value="Glyceraldehyde-3-phosphate dehydrogenase"/>
    <property type="match status" value="1"/>
</dbReference>
<dbReference type="FunFam" id="3.40.50.720:FF:000266">
    <property type="entry name" value="Glyceraldehyde-3-phosphate dehydrogenase"/>
    <property type="match status" value="1"/>
</dbReference>
<dbReference type="Gene3D" id="3.30.360.10">
    <property type="entry name" value="Dihydrodipicolinate Reductase, domain 2"/>
    <property type="match status" value="1"/>
</dbReference>
<dbReference type="Gene3D" id="3.40.50.720">
    <property type="entry name" value="NAD(P)-binding Rossmann-like Domain"/>
    <property type="match status" value="1"/>
</dbReference>
<dbReference type="InterPro" id="IPR020831">
    <property type="entry name" value="GlycerAld/Erythrose_P_DH"/>
</dbReference>
<dbReference type="InterPro" id="IPR020830">
    <property type="entry name" value="GlycerAld_3-P_DH_AS"/>
</dbReference>
<dbReference type="InterPro" id="IPR020829">
    <property type="entry name" value="GlycerAld_3-P_DH_cat"/>
</dbReference>
<dbReference type="InterPro" id="IPR020828">
    <property type="entry name" value="GlycerAld_3-P_DH_NAD(P)-bd"/>
</dbReference>
<dbReference type="InterPro" id="IPR006424">
    <property type="entry name" value="Glyceraldehyde-3-P_DH_1"/>
</dbReference>
<dbReference type="InterPro" id="IPR036291">
    <property type="entry name" value="NAD(P)-bd_dom_sf"/>
</dbReference>
<dbReference type="NCBIfam" id="TIGR01534">
    <property type="entry name" value="GAPDH-I"/>
    <property type="match status" value="1"/>
</dbReference>
<dbReference type="PANTHER" id="PTHR10836">
    <property type="entry name" value="GLYCERALDEHYDE 3-PHOSPHATE DEHYDROGENASE"/>
    <property type="match status" value="1"/>
</dbReference>
<dbReference type="PANTHER" id="PTHR10836:SF76">
    <property type="entry name" value="GLYCERALDEHYDE-3-PHOSPHATE DEHYDROGENASE-RELATED"/>
    <property type="match status" value="1"/>
</dbReference>
<dbReference type="Pfam" id="PF02800">
    <property type="entry name" value="Gp_dh_C"/>
    <property type="match status" value="1"/>
</dbReference>
<dbReference type="Pfam" id="PF00044">
    <property type="entry name" value="Gp_dh_N"/>
    <property type="match status" value="1"/>
</dbReference>
<dbReference type="PIRSF" id="PIRSF000149">
    <property type="entry name" value="GAP_DH"/>
    <property type="match status" value="1"/>
</dbReference>
<dbReference type="PRINTS" id="PR00078">
    <property type="entry name" value="G3PDHDRGNASE"/>
</dbReference>
<dbReference type="SMART" id="SM00846">
    <property type="entry name" value="Gp_dh_N"/>
    <property type="match status" value="1"/>
</dbReference>
<dbReference type="SUPFAM" id="SSF55347">
    <property type="entry name" value="Glyceraldehyde-3-phosphate dehydrogenase-like, C-terminal domain"/>
    <property type="match status" value="1"/>
</dbReference>
<dbReference type="SUPFAM" id="SSF51735">
    <property type="entry name" value="NAD(P)-binding Rossmann-fold domains"/>
    <property type="match status" value="1"/>
</dbReference>
<dbReference type="PROSITE" id="PS00071">
    <property type="entry name" value="GAPDH"/>
    <property type="match status" value="1"/>
</dbReference>
<feature type="chain" id="PRO_0000145526" description="Glyceraldehyde-3-phosphate dehydrogenase 1">
    <location>
        <begin position="1"/>
        <end position="337"/>
    </location>
</feature>
<feature type="active site" description="Nucleophile" evidence="2">
    <location>
        <position position="152"/>
    </location>
</feature>
<feature type="binding site" evidence="1">
    <location>
        <begin position="12"/>
        <end position="13"/>
    </location>
    <ligand>
        <name>NAD(+)</name>
        <dbReference type="ChEBI" id="CHEBI:57540"/>
    </ligand>
</feature>
<feature type="binding site" evidence="1">
    <location>
        <position position="34"/>
    </location>
    <ligand>
        <name>NAD(+)</name>
        <dbReference type="ChEBI" id="CHEBI:57540"/>
    </ligand>
</feature>
<feature type="binding site" evidence="1">
    <location>
        <position position="79"/>
    </location>
    <ligand>
        <name>NAD(+)</name>
        <dbReference type="ChEBI" id="CHEBI:57540"/>
    </ligand>
</feature>
<feature type="binding site" evidence="1">
    <location>
        <begin position="151"/>
        <end position="153"/>
    </location>
    <ligand>
        <name>D-glyceraldehyde 3-phosphate</name>
        <dbReference type="ChEBI" id="CHEBI:59776"/>
    </ligand>
</feature>
<feature type="binding site" evidence="1">
    <location>
        <position position="182"/>
    </location>
    <ligand>
        <name>D-glyceraldehyde 3-phosphate</name>
        <dbReference type="ChEBI" id="CHEBI:59776"/>
    </ligand>
</feature>
<feature type="binding site" evidence="1">
    <location>
        <begin position="211"/>
        <end position="212"/>
    </location>
    <ligand>
        <name>D-glyceraldehyde 3-phosphate</name>
        <dbReference type="ChEBI" id="CHEBI:59776"/>
    </ligand>
</feature>
<feature type="binding site" evidence="1">
    <location>
        <position position="234"/>
    </location>
    <ligand>
        <name>D-glyceraldehyde 3-phosphate</name>
        <dbReference type="ChEBI" id="CHEBI:59776"/>
    </ligand>
</feature>
<feature type="binding site" evidence="1">
    <location>
        <position position="316"/>
    </location>
    <ligand>
        <name>NAD(+)</name>
        <dbReference type="ChEBI" id="CHEBI:57540"/>
    </ligand>
</feature>
<feature type="site" description="Activates thiol group during catalysis" evidence="1">
    <location>
        <position position="179"/>
    </location>
</feature>
<feature type="sequence variant" description="In strain: ATCC 30957 / WB.">
    <original>A</original>
    <variation>P</variation>
    <location>
        <position position="214"/>
    </location>
</feature>
<feature type="sequence variant" description="In strain: ATCC 30957 / WB.">
    <original>N</original>
    <variation>K</variation>
    <location>
        <position position="268"/>
    </location>
</feature>
<accession>P53429</accession>
<evidence type="ECO:0000250" key="1"/>
<evidence type="ECO:0000255" key="2">
    <source>
        <dbReference type="PROSITE-ProRule" id="PRU10009"/>
    </source>
</evidence>
<evidence type="ECO:0000305" key="3"/>
<name>G3P1_GIAIN</name>
<comment type="catalytic activity">
    <reaction evidence="2">
        <text>D-glyceraldehyde 3-phosphate + phosphate + NAD(+) = (2R)-3-phospho-glyceroyl phosphate + NADH + H(+)</text>
        <dbReference type="Rhea" id="RHEA:10300"/>
        <dbReference type="ChEBI" id="CHEBI:15378"/>
        <dbReference type="ChEBI" id="CHEBI:43474"/>
        <dbReference type="ChEBI" id="CHEBI:57540"/>
        <dbReference type="ChEBI" id="CHEBI:57604"/>
        <dbReference type="ChEBI" id="CHEBI:57945"/>
        <dbReference type="ChEBI" id="CHEBI:59776"/>
        <dbReference type="EC" id="1.2.1.12"/>
    </reaction>
</comment>
<comment type="pathway">
    <text>Carbohydrate degradation; glycolysis; pyruvate from D-glyceraldehyde 3-phosphate: step 1/5.</text>
</comment>
<comment type="subunit">
    <text evidence="1">Homotetramer.</text>
</comment>
<comment type="subcellular location">
    <subcellularLocation>
        <location evidence="1">Cytoplasm</location>
    </subcellularLocation>
</comment>
<comment type="similarity">
    <text evidence="3">Belongs to the glyceraldehyde-3-phosphate dehydrogenase family.</text>
</comment>
<keyword id="KW-0963">Cytoplasm</keyword>
<keyword id="KW-0324">Glycolysis</keyword>
<keyword id="KW-0520">NAD</keyword>
<keyword id="KW-0560">Oxidoreductase</keyword>
<sequence>MPIRLGINGFGRIGRMALRASLNIDGVQVVAINDPFTDCEYMEYMLKYDTVHGRFDGTIAHSEDSITVNGNKISVFKSMKPEEIPWGKTQVDIVLECTGRFTTKKDAELHITGGCKRVIISAPSADAPMFVCGCNLETYDPSTMKVISNASCTTNCLAPLAMVVNKKFGIKEGLMTTVHAVTATQLPVDGPSKKDWRGGRSCGANVIPSSTGAAKAVGKVLPALNGKLTGMAFRVPVPDVSVVDLTCTLEKDATYDEICAEIKRGSENELKGIMTYTNEDVVSSDFLSTTSTCNFDSKAGIMLNSRFVKLVAWYDNEFGYANKLVELAKYVGSKGCQ</sequence>
<proteinExistence type="inferred from homology"/>
<reference key="1">
    <citation type="submission" date="1992-03" db="EMBL/GenBank/DDBJ databases">
        <authorList>
            <person name="Rozario C."/>
            <person name="Smith M.W."/>
            <person name="Muller M."/>
        </authorList>
    </citation>
    <scope>NUCLEOTIDE SEQUENCE [GENOMIC DNA]</scope>
    <source>
        <strain>ATCC 30957 / WB</strain>
    </source>
</reference>
<reference key="2">
    <citation type="submission" date="1992-03" db="EMBL/GenBank/DDBJ databases">
        <authorList>
            <person name="Smith M.W."/>
            <person name="Doolittle R.F."/>
        </authorList>
    </citation>
    <scope>NUCLEOTIDE SEQUENCE [GENOMIC DNA] OF 14-312</scope>
    <source>
        <strain>ATCC 30957 / WB</strain>
    </source>
</reference>
<organism>
    <name type="scientific">Giardia intestinalis</name>
    <name type="common">Giardia lamblia</name>
    <dbReference type="NCBI Taxonomy" id="5741"/>
    <lineage>
        <taxon>Eukaryota</taxon>
        <taxon>Metamonada</taxon>
        <taxon>Diplomonadida</taxon>
        <taxon>Hexamitidae</taxon>
        <taxon>Giardiinae</taxon>
        <taxon>Giardia</taxon>
    </lineage>
</organism>
<gene>
    <name type="primary">GAP1</name>
</gene>